<reference key="1">
    <citation type="journal article" date="2005" name="Science">
        <title>The transcriptional landscape of the mammalian genome.</title>
        <authorList>
            <person name="Carninci P."/>
            <person name="Kasukawa T."/>
            <person name="Katayama S."/>
            <person name="Gough J."/>
            <person name="Frith M.C."/>
            <person name="Maeda N."/>
            <person name="Oyama R."/>
            <person name="Ravasi T."/>
            <person name="Lenhard B."/>
            <person name="Wells C."/>
            <person name="Kodzius R."/>
            <person name="Shimokawa K."/>
            <person name="Bajic V.B."/>
            <person name="Brenner S.E."/>
            <person name="Batalov S."/>
            <person name="Forrest A.R."/>
            <person name="Zavolan M."/>
            <person name="Davis M.J."/>
            <person name="Wilming L.G."/>
            <person name="Aidinis V."/>
            <person name="Allen J.E."/>
            <person name="Ambesi-Impiombato A."/>
            <person name="Apweiler R."/>
            <person name="Aturaliya R.N."/>
            <person name="Bailey T.L."/>
            <person name="Bansal M."/>
            <person name="Baxter L."/>
            <person name="Beisel K.W."/>
            <person name="Bersano T."/>
            <person name="Bono H."/>
            <person name="Chalk A.M."/>
            <person name="Chiu K.P."/>
            <person name="Choudhary V."/>
            <person name="Christoffels A."/>
            <person name="Clutterbuck D.R."/>
            <person name="Crowe M.L."/>
            <person name="Dalla E."/>
            <person name="Dalrymple B.P."/>
            <person name="de Bono B."/>
            <person name="Della Gatta G."/>
            <person name="di Bernardo D."/>
            <person name="Down T."/>
            <person name="Engstrom P."/>
            <person name="Fagiolini M."/>
            <person name="Faulkner G."/>
            <person name="Fletcher C.F."/>
            <person name="Fukushima T."/>
            <person name="Furuno M."/>
            <person name="Futaki S."/>
            <person name="Gariboldi M."/>
            <person name="Georgii-Hemming P."/>
            <person name="Gingeras T.R."/>
            <person name="Gojobori T."/>
            <person name="Green R.E."/>
            <person name="Gustincich S."/>
            <person name="Harbers M."/>
            <person name="Hayashi Y."/>
            <person name="Hensch T.K."/>
            <person name="Hirokawa N."/>
            <person name="Hill D."/>
            <person name="Huminiecki L."/>
            <person name="Iacono M."/>
            <person name="Ikeo K."/>
            <person name="Iwama A."/>
            <person name="Ishikawa T."/>
            <person name="Jakt M."/>
            <person name="Kanapin A."/>
            <person name="Katoh M."/>
            <person name="Kawasawa Y."/>
            <person name="Kelso J."/>
            <person name="Kitamura H."/>
            <person name="Kitano H."/>
            <person name="Kollias G."/>
            <person name="Krishnan S.P."/>
            <person name="Kruger A."/>
            <person name="Kummerfeld S.K."/>
            <person name="Kurochkin I.V."/>
            <person name="Lareau L.F."/>
            <person name="Lazarevic D."/>
            <person name="Lipovich L."/>
            <person name="Liu J."/>
            <person name="Liuni S."/>
            <person name="McWilliam S."/>
            <person name="Madan Babu M."/>
            <person name="Madera M."/>
            <person name="Marchionni L."/>
            <person name="Matsuda H."/>
            <person name="Matsuzawa S."/>
            <person name="Miki H."/>
            <person name="Mignone F."/>
            <person name="Miyake S."/>
            <person name="Morris K."/>
            <person name="Mottagui-Tabar S."/>
            <person name="Mulder N."/>
            <person name="Nakano N."/>
            <person name="Nakauchi H."/>
            <person name="Ng P."/>
            <person name="Nilsson R."/>
            <person name="Nishiguchi S."/>
            <person name="Nishikawa S."/>
            <person name="Nori F."/>
            <person name="Ohara O."/>
            <person name="Okazaki Y."/>
            <person name="Orlando V."/>
            <person name="Pang K.C."/>
            <person name="Pavan W.J."/>
            <person name="Pavesi G."/>
            <person name="Pesole G."/>
            <person name="Petrovsky N."/>
            <person name="Piazza S."/>
            <person name="Reed J."/>
            <person name="Reid J.F."/>
            <person name="Ring B.Z."/>
            <person name="Ringwald M."/>
            <person name="Rost B."/>
            <person name="Ruan Y."/>
            <person name="Salzberg S.L."/>
            <person name="Sandelin A."/>
            <person name="Schneider C."/>
            <person name="Schoenbach C."/>
            <person name="Sekiguchi K."/>
            <person name="Semple C.A."/>
            <person name="Seno S."/>
            <person name="Sessa L."/>
            <person name="Sheng Y."/>
            <person name="Shibata Y."/>
            <person name="Shimada H."/>
            <person name="Shimada K."/>
            <person name="Silva D."/>
            <person name="Sinclair B."/>
            <person name="Sperling S."/>
            <person name="Stupka E."/>
            <person name="Sugiura K."/>
            <person name="Sultana R."/>
            <person name="Takenaka Y."/>
            <person name="Taki K."/>
            <person name="Tammoja K."/>
            <person name="Tan S.L."/>
            <person name="Tang S."/>
            <person name="Taylor M.S."/>
            <person name="Tegner J."/>
            <person name="Teichmann S.A."/>
            <person name="Ueda H.R."/>
            <person name="van Nimwegen E."/>
            <person name="Verardo R."/>
            <person name="Wei C.L."/>
            <person name="Yagi K."/>
            <person name="Yamanishi H."/>
            <person name="Zabarovsky E."/>
            <person name="Zhu S."/>
            <person name="Zimmer A."/>
            <person name="Hide W."/>
            <person name="Bult C."/>
            <person name="Grimmond S.M."/>
            <person name="Teasdale R.D."/>
            <person name="Liu E.T."/>
            <person name="Brusic V."/>
            <person name="Quackenbush J."/>
            <person name="Wahlestedt C."/>
            <person name="Mattick J.S."/>
            <person name="Hume D.A."/>
            <person name="Kai C."/>
            <person name="Sasaki D."/>
            <person name="Tomaru Y."/>
            <person name="Fukuda S."/>
            <person name="Kanamori-Katayama M."/>
            <person name="Suzuki M."/>
            <person name="Aoki J."/>
            <person name="Arakawa T."/>
            <person name="Iida J."/>
            <person name="Imamura K."/>
            <person name="Itoh M."/>
            <person name="Kato T."/>
            <person name="Kawaji H."/>
            <person name="Kawagashira N."/>
            <person name="Kawashima T."/>
            <person name="Kojima M."/>
            <person name="Kondo S."/>
            <person name="Konno H."/>
            <person name="Nakano K."/>
            <person name="Ninomiya N."/>
            <person name="Nishio T."/>
            <person name="Okada M."/>
            <person name="Plessy C."/>
            <person name="Shibata K."/>
            <person name="Shiraki T."/>
            <person name="Suzuki S."/>
            <person name="Tagami M."/>
            <person name="Waki K."/>
            <person name="Watahiki A."/>
            <person name="Okamura-Oho Y."/>
            <person name="Suzuki H."/>
            <person name="Kawai J."/>
            <person name="Hayashizaki Y."/>
        </authorList>
    </citation>
    <scope>NUCLEOTIDE SEQUENCE [LARGE SCALE MRNA] (ISOFORMS 1 AND 2)</scope>
    <source>
        <strain>C57BL/6J</strain>
        <tissue>Hypothalamus</tissue>
        <tissue>Liver</tissue>
    </source>
</reference>
<reference key="2">
    <citation type="journal article" date="2004" name="Genome Res.">
        <title>The status, quality, and expansion of the NIH full-length cDNA project: the Mammalian Gene Collection (MGC).</title>
        <authorList>
            <consortium name="The MGC Project Team"/>
        </authorList>
    </citation>
    <scope>NUCLEOTIDE SEQUENCE [LARGE SCALE MRNA] (ISOFORM 1)</scope>
    <source>
        <strain>FVB/N</strain>
        <tissue>Kidney</tissue>
    </source>
</reference>
<reference key="3">
    <citation type="journal article" date="2007" name="Arch. Biochem. Biophys.">
        <title>Differentiation-dependent expression of Adhfe1 in adipogenesis.</title>
        <authorList>
            <person name="Kim J.Y."/>
            <person name="Tillison K.S."/>
            <person name="Zhou S."/>
            <person name="Lee J.H."/>
            <person name="Smas C.M."/>
        </authorList>
    </citation>
    <scope>SUBCELLULAR LOCATION</scope>
    <scope>TISSUE SPECIFICITY</scope>
    <scope>INDUCTION</scope>
</reference>
<reference key="4">
    <citation type="journal article" date="2010" name="Cell">
        <title>A tissue-specific atlas of mouse protein phosphorylation and expression.</title>
        <authorList>
            <person name="Huttlin E.L."/>
            <person name="Jedrychowski M.P."/>
            <person name="Elias J.E."/>
            <person name="Goswami T."/>
            <person name="Rad R."/>
            <person name="Beausoleil S.A."/>
            <person name="Villen J."/>
            <person name="Haas W."/>
            <person name="Sowa M.E."/>
            <person name="Gygi S.P."/>
        </authorList>
    </citation>
    <scope>PHOSPHORYLATION [LARGE SCALE ANALYSIS] AT SER-450</scope>
    <scope>IDENTIFICATION BY MASS SPECTROMETRY [LARGE SCALE ANALYSIS]</scope>
    <source>
        <tissue>Brown adipose tissue</tissue>
        <tissue>Heart</tissue>
        <tissue>Kidney</tissue>
        <tissue>Liver</tissue>
        <tissue>Pancreas</tissue>
    </source>
</reference>
<reference key="5">
    <citation type="journal article" date="2013" name="Proc. Natl. Acad. Sci. U.S.A.">
        <title>Label-free quantitative proteomics of the lysine acetylome in mitochondria identifies substrates of SIRT3 in metabolic pathways.</title>
        <authorList>
            <person name="Rardin M.J."/>
            <person name="Newman J.C."/>
            <person name="Held J.M."/>
            <person name="Cusack M.P."/>
            <person name="Sorensen D.J."/>
            <person name="Li B."/>
            <person name="Schilling B."/>
            <person name="Mooney S.D."/>
            <person name="Kahn C.R."/>
            <person name="Verdin E."/>
            <person name="Gibson B.W."/>
        </authorList>
    </citation>
    <scope>ACETYLATION [LARGE SCALE ANALYSIS] AT LYS-443</scope>
    <scope>IDENTIFICATION BY MASS SPECTROMETRY [LARGE SCALE ANALYSIS]</scope>
    <source>
        <tissue>Liver</tissue>
    </source>
</reference>
<dbReference type="EC" id="1.1.99.24"/>
<dbReference type="EMBL" id="AK038853">
    <property type="protein sequence ID" value="BAC30151.1"/>
    <property type="molecule type" value="mRNA"/>
</dbReference>
<dbReference type="EMBL" id="AK050178">
    <property type="protein sequence ID" value="BAC34108.1"/>
    <property type="molecule type" value="mRNA"/>
</dbReference>
<dbReference type="EMBL" id="BC026584">
    <property type="protein sequence ID" value="AAH26584.2"/>
    <property type="molecule type" value="mRNA"/>
</dbReference>
<dbReference type="CCDS" id="CCDS14812.1">
    <molecule id="Q8R0N6-1"/>
</dbReference>
<dbReference type="RefSeq" id="NP_001344305.1">
    <molecule id="Q8R0N6-2"/>
    <property type="nucleotide sequence ID" value="NM_001357376.1"/>
</dbReference>
<dbReference type="RefSeq" id="NP_001344306.1">
    <molecule id="Q8R0N6-2"/>
    <property type="nucleotide sequence ID" value="NM_001357377.1"/>
</dbReference>
<dbReference type="RefSeq" id="NP_780445.1">
    <molecule id="Q8R0N6-1"/>
    <property type="nucleotide sequence ID" value="NM_175236.5"/>
</dbReference>
<dbReference type="RefSeq" id="XP_006495649.1">
    <molecule id="Q8R0N6-2"/>
    <property type="nucleotide sequence ID" value="XM_006495586.4"/>
</dbReference>
<dbReference type="RefSeq" id="XP_017168188.1">
    <property type="nucleotide sequence ID" value="XM_017312699.1"/>
</dbReference>
<dbReference type="SMR" id="Q8R0N6"/>
<dbReference type="BioGRID" id="218012">
    <property type="interactions" value="2"/>
</dbReference>
<dbReference type="FunCoup" id="Q8R0N6">
    <property type="interactions" value="725"/>
</dbReference>
<dbReference type="IntAct" id="Q8R0N6">
    <property type="interactions" value="1"/>
</dbReference>
<dbReference type="STRING" id="10090.ENSMUSP00000116627"/>
<dbReference type="GlyGen" id="Q8R0N6">
    <property type="glycosylation" value="1 site"/>
</dbReference>
<dbReference type="iPTMnet" id="Q8R0N6"/>
<dbReference type="PhosphoSitePlus" id="Q8R0N6"/>
<dbReference type="SwissPalm" id="Q8R0N6"/>
<dbReference type="jPOST" id="Q8R0N6"/>
<dbReference type="PaxDb" id="10090-ENSMUSP00000116627"/>
<dbReference type="PeptideAtlas" id="Q8R0N6"/>
<dbReference type="ProteomicsDB" id="273131">
    <molecule id="Q8R0N6-1"/>
</dbReference>
<dbReference type="ProteomicsDB" id="273132">
    <molecule id="Q8R0N6-2"/>
</dbReference>
<dbReference type="DNASU" id="76187"/>
<dbReference type="Ensembl" id="ENSMUST00000144177.8">
    <molecule id="Q8R0N6-1"/>
    <property type="protein sequence ID" value="ENSMUSP00000116627.2"/>
    <property type="gene ID" value="ENSMUSG00000025911.15"/>
</dbReference>
<dbReference type="GeneID" id="76187"/>
<dbReference type="KEGG" id="mmu:76187"/>
<dbReference type="UCSC" id="uc007agl.2">
    <molecule id="Q8R0N6-1"/>
    <property type="organism name" value="mouse"/>
</dbReference>
<dbReference type="AGR" id="MGI:1923437"/>
<dbReference type="CTD" id="137872"/>
<dbReference type="MGI" id="MGI:1923437">
    <property type="gene designation" value="Adhfe1"/>
</dbReference>
<dbReference type="VEuPathDB" id="HostDB:ENSMUSG00000025911"/>
<dbReference type="eggNOG" id="KOG3857">
    <property type="taxonomic scope" value="Eukaryota"/>
</dbReference>
<dbReference type="GeneTree" id="ENSGT00390000003849"/>
<dbReference type="InParanoid" id="Q8R0N6"/>
<dbReference type="OMA" id="NLMGAGC"/>
<dbReference type="OrthoDB" id="339764at2759"/>
<dbReference type="PhylomeDB" id="Q8R0N6"/>
<dbReference type="TreeFam" id="TF105710"/>
<dbReference type="Reactome" id="R-MMU-880009">
    <property type="pathway name" value="Interconversion of 2-oxoglutarate and 2-hydroxyglutarate"/>
</dbReference>
<dbReference type="SABIO-RK" id="Q8R0N6"/>
<dbReference type="BioGRID-ORCS" id="76187">
    <property type="hits" value="1 hit in 77 CRISPR screens"/>
</dbReference>
<dbReference type="ChiTaRS" id="Adhfe1">
    <property type="organism name" value="mouse"/>
</dbReference>
<dbReference type="PRO" id="PR:Q8R0N6"/>
<dbReference type="Proteomes" id="UP000000589">
    <property type="component" value="Chromosome 1"/>
</dbReference>
<dbReference type="RNAct" id="Q8R0N6">
    <property type="molecule type" value="protein"/>
</dbReference>
<dbReference type="Bgee" id="ENSMUSG00000025911">
    <property type="expression patterns" value="Expressed in right kidney and 104 other cell types or tissues"/>
</dbReference>
<dbReference type="ExpressionAtlas" id="Q8R0N6">
    <property type="expression patterns" value="baseline and differential"/>
</dbReference>
<dbReference type="GO" id="GO:0005739">
    <property type="term" value="C:mitochondrion"/>
    <property type="evidence" value="ECO:0000314"/>
    <property type="project" value="UniProtKB"/>
</dbReference>
<dbReference type="GO" id="GO:0004022">
    <property type="term" value="F:alcohol dehydrogenase (NAD+) activity"/>
    <property type="evidence" value="ECO:0007669"/>
    <property type="project" value="InterPro"/>
</dbReference>
<dbReference type="GO" id="GO:0047988">
    <property type="term" value="F:hydroxyacid-oxoacid transhydrogenase activity"/>
    <property type="evidence" value="ECO:0000250"/>
    <property type="project" value="UniProtKB"/>
</dbReference>
<dbReference type="GO" id="GO:0046872">
    <property type="term" value="F:metal ion binding"/>
    <property type="evidence" value="ECO:0007669"/>
    <property type="project" value="InterPro"/>
</dbReference>
<dbReference type="GO" id="GO:0019552">
    <property type="term" value="P:glutamate catabolic process via 2-hydroxyglutarate"/>
    <property type="evidence" value="ECO:0000250"/>
    <property type="project" value="UniProtKB"/>
</dbReference>
<dbReference type="GO" id="GO:0006629">
    <property type="term" value="P:lipid metabolic process"/>
    <property type="evidence" value="ECO:0007669"/>
    <property type="project" value="UniProtKB-KW"/>
</dbReference>
<dbReference type="CDD" id="cd08190">
    <property type="entry name" value="HOT"/>
    <property type="match status" value="1"/>
</dbReference>
<dbReference type="FunFam" id="1.20.1090.10:FF:000003">
    <property type="entry name" value="Probable hydroxyacid-oxoacid transhydrogenase, mitochondrial"/>
    <property type="match status" value="1"/>
</dbReference>
<dbReference type="FunFam" id="3.40.50.1970:FF:000010">
    <property type="entry name" value="Probable hydroxyacid-oxoacid transhydrogenase, mitochondrial"/>
    <property type="match status" value="1"/>
</dbReference>
<dbReference type="Gene3D" id="3.40.50.1970">
    <property type="match status" value="1"/>
</dbReference>
<dbReference type="Gene3D" id="1.20.1090.10">
    <property type="entry name" value="Dehydroquinate synthase-like - alpha domain"/>
    <property type="match status" value="1"/>
</dbReference>
<dbReference type="InterPro" id="IPR001670">
    <property type="entry name" value="ADH_Fe/GldA"/>
</dbReference>
<dbReference type="InterPro" id="IPR056798">
    <property type="entry name" value="ADH_Fe_C"/>
</dbReference>
<dbReference type="InterPro" id="IPR039697">
    <property type="entry name" value="Alcohol_dehydrogenase_Fe"/>
</dbReference>
<dbReference type="InterPro" id="IPR042157">
    <property type="entry name" value="HOT"/>
</dbReference>
<dbReference type="PANTHER" id="PTHR11496">
    <property type="entry name" value="ALCOHOL DEHYDROGENASE"/>
    <property type="match status" value="1"/>
</dbReference>
<dbReference type="PANTHER" id="PTHR11496:SF83">
    <property type="entry name" value="HYDROXYACID-OXOACID TRANSHYDROGENASE, MITOCHONDRIAL"/>
    <property type="match status" value="1"/>
</dbReference>
<dbReference type="Pfam" id="PF25137">
    <property type="entry name" value="ADH_Fe_C"/>
    <property type="match status" value="1"/>
</dbReference>
<dbReference type="Pfam" id="PF00465">
    <property type="entry name" value="Fe-ADH"/>
    <property type="match status" value="1"/>
</dbReference>
<dbReference type="SUPFAM" id="SSF56796">
    <property type="entry name" value="Dehydroquinate synthase-like"/>
    <property type="match status" value="1"/>
</dbReference>
<proteinExistence type="evidence at protein level"/>
<name>HOT_MOUSE</name>
<accession>Q8R0N6</accession>
<accession>Q78SV3</accession>
<accession>Q8BYP0</accession>
<sequence>MAAAARARVTHLLRHLQSTACQCPTHSHTYSQAPGPSGKTADYAFEMAVSNIRYGAGVTKEVGMDLQNMGAKNVCLMTDKNLSQLPPVQIVMDSLSKNGISFQVYDDVRVEPTDGSFMDAIEFAKKGAFDAYVAVGGGSTMDTCKAANLYASSPHSEFLDYVNAPIGKGKPVTVPLKPLIAVPTTSGTGSETTGVAIFDYEHLKVKTGIASRAIKPTLGLVDPLHTLHMPCQVVANSGFDVLCHALESYTAIPYSMRSPCPSNPIQRPAYQGSNPISDIWAVHALQIVAKYLKRAVRNPDDLEARSKMHLASAFAGIGFGNAGVHLCHGMSYPISGLVKTYKAKEYNVDHPLVPHGLSVVLTSPAVFTFTAQMFPERHLETAGILGANIRTARIQDAGLVLADALRKFLFDLNVDDGLAALGYSKDDIPSLVKGTLPQERVTKLAPRAQSEEDLSALFEASMKLY</sequence>
<comment type="function">
    <text evidence="1">Catalyzes the cofactor-independent reversible oxidation of gamma-hydroxybutyrate (GHB) to succinic semialdehyde (SSA) coupled to reduction of 2-ketoglutarate (2-KG) to D-2-hydroxyglutarate (D-2-HG). L-3-hydroxybutyrate (L-3-OHB) is also a substrate for HOT when using 2-KG as hydrogen acceptor, resulting in the formation of D-2-HG (By similarity).</text>
</comment>
<comment type="catalytic activity">
    <reaction>
        <text>(S)-3-hydroxybutanoate + 2-oxoglutarate = (R)-2-hydroxyglutarate + acetoacetate</text>
        <dbReference type="Rhea" id="RHEA:23048"/>
        <dbReference type="ChEBI" id="CHEBI:11047"/>
        <dbReference type="ChEBI" id="CHEBI:13705"/>
        <dbReference type="ChEBI" id="CHEBI:15801"/>
        <dbReference type="ChEBI" id="CHEBI:16810"/>
        <dbReference type="EC" id="1.1.99.24"/>
    </reaction>
</comment>
<comment type="catalytic activity">
    <reaction>
        <text>4-hydroxybutanoate + 2-oxoglutarate = (R)-2-hydroxyglutarate + succinate semialdehyde</text>
        <dbReference type="Rhea" id="RHEA:24734"/>
        <dbReference type="ChEBI" id="CHEBI:15801"/>
        <dbReference type="ChEBI" id="CHEBI:16724"/>
        <dbReference type="ChEBI" id="CHEBI:16810"/>
        <dbReference type="ChEBI" id="CHEBI:57706"/>
        <dbReference type="EC" id="1.1.99.24"/>
    </reaction>
</comment>
<comment type="subcellular location">
    <subcellularLocation>
        <location evidence="3">Mitochondrion</location>
    </subcellularLocation>
</comment>
<comment type="alternative products">
    <event type="alternative splicing"/>
    <isoform>
        <id>Q8R0N6-1</id>
        <name>1</name>
        <sequence type="displayed"/>
    </isoform>
    <isoform>
        <id>Q8R0N6-2</id>
        <name>2</name>
        <sequence type="described" ref="VSP_031987"/>
    </isoform>
</comment>
<comment type="tissue specificity">
    <text evidence="3">Expressed in white and brown adipose tissues, liver, and kidney. Expression is differentiation-dependent during in vitro brown and white adipogenesis.</text>
</comment>
<comment type="induction">
    <text evidence="3">Down-regulated of 40% in white adipose tissue of ob/ob obese mice.</text>
</comment>
<comment type="similarity">
    <text evidence="5">Belongs to the iron-containing alcohol dehydrogenase family. Hydroxyacid-oxoacid transhydrogenase subfamily.</text>
</comment>
<feature type="transit peptide" description="Mitochondrion" evidence="2">
    <location>
        <begin position="1"/>
        <end status="unknown"/>
    </location>
</feature>
<feature type="chain" id="PRO_0000322997" description="Hydroxyacid-oxoacid transhydrogenase, mitochondrial">
    <location>
        <begin status="unknown"/>
        <end position="465"/>
    </location>
</feature>
<feature type="modified residue" description="N6-acetyllysine" evidence="7">
    <location>
        <position position="443"/>
    </location>
</feature>
<feature type="modified residue" description="Phosphoserine" evidence="6">
    <location>
        <position position="450"/>
    </location>
</feature>
<feature type="splice variant" id="VSP_031987" description="In isoform 2." evidence="4">
    <location>
        <begin position="1"/>
        <end position="46"/>
    </location>
</feature>
<organism>
    <name type="scientific">Mus musculus</name>
    <name type="common">Mouse</name>
    <dbReference type="NCBI Taxonomy" id="10090"/>
    <lineage>
        <taxon>Eukaryota</taxon>
        <taxon>Metazoa</taxon>
        <taxon>Chordata</taxon>
        <taxon>Craniata</taxon>
        <taxon>Vertebrata</taxon>
        <taxon>Euteleostomi</taxon>
        <taxon>Mammalia</taxon>
        <taxon>Eutheria</taxon>
        <taxon>Euarchontoglires</taxon>
        <taxon>Glires</taxon>
        <taxon>Rodentia</taxon>
        <taxon>Myomorpha</taxon>
        <taxon>Muroidea</taxon>
        <taxon>Muridae</taxon>
        <taxon>Murinae</taxon>
        <taxon>Mus</taxon>
        <taxon>Mus</taxon>
    </lineage>
</organism>
<keyword id="KW-0007">Acetylation</keyword>
<keyword id="KW-0025">Alternative splicing</keyword>
<keyword id="KW-0443">Lipid metabolism</keyword>
<keyword id="KW-0496">Mitochondrion</keyword>
<keyword id="KW-0560">Oxidoreductase</keyword>
<keyword id="KW-0597">Phosphoprotein</keyword>
<keyword id="KW-1185">Reference proteome</keyword>
<keyword id="KW-0809">Transit peptide</keyword>
<protein>
    <recommendedName>
        <fullName>Hydroxyacid-oxoacid transhydrogenase, mitochondrial</fullName>
        <shortName>HOT</shortName>
        <ecNumber>1.1.99.24</ecNumber>
    </recommendedName>
    <alternativeName>
        <fullName>Alcohol dehydrogenase iron-containing protein 1</fullName>
        <shortName>ADHFe1</shortName>
    </alternativeName>
</protein>
<evidence type="ECO:0000250" key="1"/>
<evidence type="ECO:0000255" key="2"/>
<evidence type="ECO:0000269" key="3">
    <source>
    </source>
</evidence>
<evidence type="ECO:0000303" key="4">
    <source>
    </source>
</evidence>
<evidence type="ECO:0000305" key="5"/>
<evidence type="ECO:0007744" key="6">
    <source>
    </source>
</evidence>
<evidence type="ECO:0007744" key="7">
    <source>
    </source>
</evidence>
<gene>
    <name type="primary">Adhfe1</name>
</gene>